<accession>A6QG34</accession>
<name>ISDE_STAAE</name>
<feature type="signal peptide" evidence="2">
    <location>
        <begin position="1"/>
        <end position="19"/>
    </location>
</feature>
<feature type="chain" id="PRO_0000326216" description="High-affinity heme uptake system protein IsdE">
    <location>
        <begin position="20"/>
        <end position="292"/>
    </location>
</feature>
<feature type="domain" description="Fe/B12 periplasmic-binding" evidence="3">
    <location>
        <begin position="35"/>
        <end position="291"/>
    </location>
</feature>
<feature type="binding site" evidence="1">
    <location>
        <position position="41"/>
    </location>
    <ligand>
        <name>heme</name>
        <dbReference type="ChEBI" id="CHEBI:30413"/>
    </ligand>
</feature>
<feature type="binding site" evidence="1">
    <location>
        <position position="42"/>
    </location>
    <ligand>
        <name>heme</name>
        <dbReference type="ChEBI" id="CHEBI:30413"/>
    </ligand>
</feature>
<feature type="binding site" evidence="1">
    <location>
        <position position="60"/>
    </location>
    <ligand>
        <name>heme</name>
        <dbReference type="ChEBI" id="CHEBI:30413"/>
    </ligand>
</feature>
<feature type="binding site" evidence="1">
    <location>
        <position position="61"/>
    </location>
    <ligand>
        <name>heme</name>
        <dbReference type="ChEBI" id="CHEBI:30413"/>
    </ligand>
</feature>
<feature type="binding site" description="axial binding residue" evidence="1">
    <location>
        <position position="78"/>
    </location>
    <ligand>
        <name>heme</name>
        <dbReference type="ChEBI" id="CHEBI:30413"/>
    </ligand>
    <ligandPart>
        <name>Fe</name>
        <dbReference type="ChEBI" id="CHEBI:18248"/>
    </ligandPart>
</feature>
<feature type="binding site" description="axial binding residue" evidence="1">
    <location>
        <position position="229"/>
    </location>
    <ligand>
        <name>heme</name>
        <dbReference type="ChEBI" id="CHEBI:30413"/>
    </ligand>
    <ligandPart>
        <name>Fe</name>
        <dbReference type="ChEBI" id="CHEBI:18248"/>
    </ligandPart>
</feature>
<feature type="lipid moiety-binding region" description="N-palmitoyl cysteine" evidence="2">
    <location>
        <position position="20"/>
    </location>
</feature>
<feature type="lipid moiety-binding region" description="S-diacylglycerol cysteine" evidence="2">
    <location>
        <position position="20"/>
    </location>
</feature>
<feature type="mutagenesis site" description="Reduction in heme-binding activity. No effect on S.aures growth on hemin." evidence="4">
    <original>M</original>
    <variation>A</variation>
    <location>
        <position position="78"/>
    </location>
</feature>
<feature type="mutagenesis site" description="Reduction in heme-binding activity. Abolishes S.aureus growth on hemin." evidence="4">
    <original>H</original>
    <variation>A</variation>
    <location>
        <position position="229"/>
    </location>
</feature>
<organism>
    <name type="scientific">Staphylococcus aureus (strain Newman)</name>
    <dbReference type="NCBI Taxonomy" id="426430"/>
    <lineage>
        <taxon>Bacteria</taxon>
        <taxon>Bacillati</taxon>
        <taxon>Bacillota</taxon>
        <taxon>Bacilli</taxon>
        <taxon>Bacillales</taxon>
        <taxon>Staphylococcaceae</taxon>
        <taxon>Staphylococcus</taxon>
    </lineage>
</organism>
<dbReference type="EMBL" id="AP009351">
    <property type="protein sequence ID" value="BAF67316.1"/>
    <property type="molecule type" value="Genomic_DNA"/>
</dbReference>
<dbReference type="RefSeq" id="WP_001220199.1">
    <property type="nucleotide sequence ID" value="NZ_JBBIAE010000001.1"/>
</dbReference>
<dbReference type="SMR" id="A6QG34"/>
<dbReference type="KEGG" id="sae:NWMN_1044"/>
<dbReference type="HOGENOM" id="CLU_038034_2_3_9"/>
<dbReference type="Proteomes" id="UP000006386">
    <property type="component" value="Chromosome"/>
</dbReference>
<dbReference type="GO" id="GO:0005886">
    <property type="term" value="C:plasma membrane"/>
    <property type="evidence" value="ECO:0007669"/>
    <property type="project" value="UniProtKB-SubCell"/>
</dbReference>
<dbReference type="GO" id="GO:0020037">
    <property type="term" value="F:heme binding"/>
    <property type="evidence" value="ECO:0007669"/>
    <property type="project" value="InterPro"/>
</dbReference>
<dbReference type="GO" id="GO:0046872">
    <property type="term" value="F:metal ion binding"/>
    <property type="evidence" value="ECO:0007669"/>
    <property type="project" value="UniProtKB-KW"/>
</dbReference>
<dbReference type="GO" id="GO:0071281">
    <property type="term" value="P:cellular response to iron ion"/>
    <property type="evidence" value="ECO:0007669"/>
    <property type="project" value="TreeGrafter"/>
</dbReference>
<dbReference type="GO" id="GO:0015886">
    <property type="term" value="P:heme transport"/>
    <property type="evidence" value="ECO:0007669"/>
    <property type="project" value="InterPro"/>
</dbReference>
<dbReference type="FunFam" id="3.40.50.1980:FF:000022">
    <property type="entry name" value="Heme ABC transporter substrate-binding protein IsdE"/>
    <property type="match status" value="1"/>
</dbReference>
<dbReference type="FunFam" id="3.40.50.1980:FF:000031">
    <property type="entry name" value="High-affinity heme uptake system protein IsdE"/>
    <property type="match status" value="1"/>
</dbReference>
<dbReference type="Gene3D" id="3.40.50.1980">
    <property type="entry name" value="Nitrogenase molybdenum iron protein domain"/>
    <property type="match status" value="2"/>
</dbReference>
<dbReference type="InterPro" id="IPR050902">
    <property type="entry name" value="ABC_Transporter_SBP"/>
</dbReference>
<dbReference type="InterPro" id="IPR019957">
    <property type="entry name" value="ABC_transptr_haem-bd_IsdE"/>
</dbReference>
<dbReference type="InterPro" id="IPR002491">
    <property type="entry name" value="ABC_transptr_periplasmic_BD"/>
</dbReference>
<dbReference type="NCBIfam" id="TIGR03659">
    <property type="entry name" value="IsdE"/>
    <property type="match status" value="1"/>
</dbReference>
<dbReference type="PANTHER" id="PTHR30535:SF36">
    <property type="entry name" value="HIGH-AFFINITY HEME UPTAKE SYSTEM PROTEIN ISDE"/>
    <property type="match status" value="1"/>
</dbReference>
<dbReference type="PANTHER" id="PTHR30535">
    <property type="entry name" value="VITAMIN B12-BINDING PROTEIN"/>
    <property type="match status" value="1"/>
</dbReference>
<dbReference type="Pfam" id="PF01497">
    <property type="entry name" value="Peripla_BP_2"/>
    <property type="match status" value="1"/>
</dbReference>
<dbReference type="SUPFAM" id="SSF53807">
    <property type="entry name" value="Helical backbone' metal receptor"/>
    <property type="match status" value="1"/>
</dbReference>
<dbReference type="PROSITE" id="PS50983">
    <property type="entry name" value="FE_B12_PBP"/>
    <property type="match status" value="1"/>
</dbReference>
<dbReference type="PROSITE" id="PS51257">
    <property type="entry name" value="PROKAR_LIPOPROTEIN"/>
    <property type="match status" value="1"/>
</dbReference>
<evidence type="ECO:0000250" key="1"/>
<evidence type="ECO:0000255" key="2">
    <source>
        <dbReference type="PROSITE-ProRule" id="PRU00303"/>
    </source>
</evidence>
<evidence type="ECO:0000255" key="3">
    <source>
        <dbReference type="PROSITE-ProRule" id="PRU00344"/>
    </source>
</evidence>
<evidence type="ECO:0000269" key="4">
    <source>
    </source>
</evidence>
<evidence type="ECO:0000305" key="5"/>
<sequence length="292" mass="33271">MRIIKYLTILVISVVILTSCQSSSSQESTKSGEFRIVPTTVALTMTLDKLDLPIVGKPTSYKTLPNRYKDVPEIGQPMEPNVEAVKKLKPTHVLSVSTIKDEMQPFYKQLNMKGYFYDFDSLKGMQKSITQLGDQFNRKAQAKELNDHLNSVKQKIENKAAKQKKHPKVLILMGVPGSYLVATDKSYIGDLVKIAGGENVIKVKDRQYISSNTENLLNINPDIILRLPHGMPEEVKKMFQKEFKQNDIWKHFKAVKNNHVYDLEEVPFGITANVDADKAMTQLYDLFYKDKK</sequence>
<protein>
    <recommendedName>
        <fullName>High-affinity heme uptake system protein IsdE</fullName>
    </recommendedName>
    <alternativeName>
        <fullName>Iron-regulated surface determinant protein E</fullName>
    </alternativeName>
    <alternativeName>
        <fullName>Staphylococcal iron-regulated protein F</fullName>
    </alternativeName>
</protein>
<comment type="function">
    <text evidence="4">Involved in heme (porphyrin) scavenging. Binds Fe(2+) and Fe(3+) heme but the largest fraction is Fe(2+) heme. Functions as a high-affinity heme binding protein and probably has a role in relaying heme-iron from cell wall-anchored isd proteins receptors to the probable permease IsdF.</text>
</comment>
<comment type="cofactor">
    <cofactor evidence="1">
        <name>heme b</name>
        <dbReference type="ChEBI" id="CHEBI:60344"/>
    </cofactor>
    <text evidence="1">Binds 1 heme b (iron(II)-protoporphyrin IX) group per subunit.</text>
</comment>
<comment type="subcellular location">
    <subcellularLocation>
        <location evidence="2">Cell membrane</location>
        <topology evidence="2">Lipid-anchor</topology>
    </subcellularLocation>
</comment>
<comment type="induction">
    <text>Repressed by fur in the presence of iron.</text>
</comment>
<comment type="disruption phenotype">
    <text evidence="4">Mutant is still able to grow on hemin as a sole source of iron but slower.</text>
</comment>
<comment type="similarity">
    <text evidence="5">Belongs to the bacterial solute-binding protein 8 family.</text>
</comment>
<reference key="1">
    <citation type="journal article" date="2008" name="J. Bacteriol.">
        <title>Genome sequence of Staphylococcus aureus strain Newman and comparative analysis of staphylococcal genomes: polymorphism and evolution of two major pathogenicity islands.</title>
        <authorList>
            <person name="Baba T."/>
            <person name="Bae T."/>
            <person name="Schneewind O."/>
            <person name="Takeuchi F."/>
            <person name="Hiramatsu K."/>
        </authorList>
    </citation>
    <scope>NUCLEOTIDE SEQUENCE [LARGE SCALE GENOMIC DNA]</scope>
    <source>
        <strain>Newman</strain>
    </source>
</reference>
<reference key="2">
    <citation type="journal article" date="2003" name="Science">
        <title>Passage of heme-iron across the envelope of Staphylococcus aureus.</title>
        <authorList>
            <person name="Mazmanian S.K."/>
            <person name="Skaar E.P."/>
            <person name="Gaspar A.H."/>
            <person name="Humayun M."/>
            <person name="Gornicki P."/>
            <person name="Jelenska J."/>
            <person name="Joachmiak A."/>
            <person name="Missiakas D.M."/>
            <person name="Schneewind O."/>
        </authorList>
    </citation>
    <scope>BINDING TO HEME-IRON</scope>
    <scope>IRON-REGULATED EXPRESSION</scope>
    <scope>SUBCELLULAR LOCATION</scope>
</reference>
<reference key="3">
    <citation type="journal article" date="2007" name="J. Biol. Chem.">
        <title>Heme coordination by Staphylococcus aureus IsdE.</title>
        <authorList>
            <person name="Grigg J.C."/>
            <person name="Vermeiren C.L."/>
            <person name="Heinrichs D.E."/>
            <person name="Murphy M.E.P."/>
        </authorList>
    </citation>
    <scope>FUNCTION</scope>
    <scope>MUTAGENESIS OF MET-78 AND HIS-229</scope>
    <scope>DISRUPTION PHENOTYPE</scope>
</reference>
<gene>
    <name type="primary">isdE</name>
    <name type="synonym">sirF</name>
    <name type="ordered locus">NWMN_1044</name>
</gene>
<proteinExistence type="evidence at protein level"/>
<keyword id="KW-1003">Cell membrane</keyword>
<keyword id="KW-0349">Heme</keyword>
<keyword id="KW-0408">Iron</keyword>
<keyword id="KW-0449">Lipoprotein</keyword>
<keyword id="KW-0472">Membrane</keyword>
<keyword id="KW-0479">Metal-binding</keyword>
<keyword id="KW-0564">Palmitate</keyword>
<keyword id="KW-0732">Signal</keyword>
<keyword id="KW-0813">Transport</keyword>